<keyword id="KW-0025">Alternative splicing</keyword>
<keyword id="KW-1003">Cell membrane</keyword>
<keyword id="KW-0963">Cytoplasm</keyword>
<keyword id="KW-0472">Membrane</keyword>
<keyword id="KW-0479">Metal-binding</keyword>
<keyword id="KW-1185">Reference proteome</keyword>
<keyword id="KW-0862">Zinc</keyword>
<keyword id="KW-0863">Zinc-finger</keyword>
<protein>
    <recommendedName>
        <fullName>Zinc finger MYND domain-containing protein 19</fullName>
    </recommendedName>
    <alternativeName>
        <fullName>Melanin-concentrating hormone receptor 1-interacting zinc finger protein</fullName>
        <shortName>MCH-R1-interacting zinc finger protein</shortName>
    </alternativeName>
</protein>
<comment type="function">
    <text>May be involved as a regulatory molecule in GPR24/MCH-R1 signaling.</text>
</comment>
<comment type="subunit">
    <text evidence="1">Interacts with GPR24/MCH-R1.</text>
</comment>
<comment type="subcellular location">
    <subcellularLocation>
        <location evidence="1">Cytoplasm</location>
    </subcellularLocation>
    <subcellularLocation>
        <location evidence="1">Cell membrane</location>
        <topology evidence="1">Peripheral membrane protein</topology>
    </subcellularLocation>
</comment>
<comment type="alternative products">
    <event type="alternative splicing"/>
    <isoform>
        <id>Q9CQG3-1</id>
        <name>1</name>
        <name>MIZIPa</name>
        <sequence type="displayed"/>
    </isoform>
    <isoform>
        <id>Q9CQG3-2</id>
        <name>2</name>
        <name>MIZIPb</name>
        <sequence type="described" ref="VSP_010075"/>
    </isoform>
</comment>
<comment type="tissue specificity">
    <text evidence="3">Expressed in brain.</text>
</comment>
<name>ZMY19_MOUSE</name>
<sequence length="227" mass="26433">MTDFKLGIVRLGRVAGKTKYTLIDEQDIPLVESYSFEARMEVDADGNGAKIFAYAFDKNRGRGSGRLLHELLWERHRGGVAPGFQVVHLNAVTVDNRLDNLQLVPWGWRPKAEETSSKQREQSLYWLAIQQLPTDPIEEQFPVLNVTRYYNANGDVVEEEENSCTYYECHYPPCTVIEKQLREFNICGRCQVARYCGSQCQQKDWPAHKKHCRERKRPFQHELEPER</sequence>
<proteinExistence type="evidence at transcript level"/>
<reference key="1">
    <citation type="journal article" date="2002" name="FEBS Lett.">
        <title>MIZIP, a highly conserved, vertebrate specific melanin-concentrating hormone receptor 1 interacting zinc-finger protein.</title>
        <authorList>
            <person name="Baechner D."/>
            <person name="Kreienkamp H.-J."/>
            <person name="Richter D."/>
        </authorList>
    </citation>
    <scope>NUCLEOTIDE SEQUENCE [MRNA] (ISOFORMS 1 AND 2)</scope>
    <scope>TISSUE SPECIFICITY</scope>
    <source>
        <tissue>Brain</tissue>
    </source>
</reference>
<reference key="2">
    <citation type="journal article" date="2005" name="Science">
        <title>The transcriptional landscape of the mammalian genome.</title>
        <authorList>
            <person name="Carninci P."/>
            <person name="Kasukawa T."/>
            <person name="Katayama S."/>
            <person name="Gough J."/>
            <person name="Frith M.C."/>
            <person name="Maeda N."/>
            <person name="Oyama R."/>
            <person name="Ravasi T."/>
            <person name="Lenhard B."/>
            <person name="Wells C."/>
            <person name="Kodzius R."/>
            <person name="Shimokawa K."/>
            <person name="Bajic V.B."/>
            <person name="Brenner S.E."/>
            <person name="Batalov S."/>
            <person name="Forrest A.R."/>
            <person name="Zavolan M."/>
            <person name="Davis M.J."/>
            <person name="Wilming L.G."/>
            <person name="Aidinis V."/>
            <person name="Allen J.E."/>
            <person name="Ambesi-Impiombato A."/>
            <person name="Apweiler R."/>
            <person name="Aturaliya R.N."/>
            <person name="Bailey T.L."/>
            <person name="Bansal M."/>
            <person name="Baxter L."/>
            <person name="Beisel K.W."/>
            <person name="Bersano T."/>
            <person name="Bono H."/>
            <person name="Chalk A.M."/>
            <person name="Chiu K.P."/>
            <person name="Choudhary V."/>
            <person name="Christoffels A."/>
            <person name="Clutterbuck D.R."/>
            <person name="Crowe M.L."/>
            <person name="Dalla E."/>
            <person name="Dalrymple B.P."/>
            <person name="de Bono B."/>
            <person name="Della Gatta G."/>
            <person name="di Bernardo D."/>
            <person name="Down T."/>
            <person name="Engstrom P."/>
            <person name="Fagiolini M."/>
            <person name="Faulkner G."/>
            <person name="Fletcher C.F."/>
            <person name="Fukushima T."/>
            <person name="Furuno M."/>
            <person name="Futaki S."/>
            <person name="Gariboldi M."/>
            <person name="Georgii-Hemming P."/>
            <person name="Gingeras T.R."/>
            <person name="Gojobori T."/>
            <person name="Green R.E."/>
            <person name="Gustincich S."/>
            <person name="Harbers M."/>
            <person name="Hayashi Y."/>
            <person name="Hensch T.K."/>
            <person name="Hirokawa N."/>
            <person name="Hill D."/>
            <person name="Huminiecki L."/>
            <person name="Iacono M."/>
            <person name="Ikeo K."/>
            <person name="Iwama A."/>
            <person name="Ishikawa T."/>
            <person name="Jakt M."/>
            <person name="Kanapin A."/>
            <person name="Katoh M."/>
            <person name="Kawasawa Y."/>
            <person name="Kelso J."/>
            <person name="Kitamura H."/>
            <person name="Kitano H."/>
            <person name="Kollias G."/>
            <person name="Krishnan S.P."/>
            <person name="Kruger A."/>
            <person name="Kummerfeld S.K."/>
            <person name="Kurochkin I.V."/>
            <person name="Lareau L.F."/>
            <person name="Lazarevic D."/>
            <person name="Lipovich L."/>
            <person name="Liu J."/>
            <person name="Liuni S."/>
            <person name="McWilliam S."/>
            <person name="Madan Babu M."/>
            <person name="Madera M."/>
            <person name="Marchionni L."/>
            <person name="Matsuda H."/>
            <person name="Matsuzawa S."/>
            <person name="Miki H."/>
            <person name="Mignone F."/>
            <person name="Miyake S."/>
            <person name="Morris K."/>
            <person name="Mottagui-Tabar S."/>
            <person name="Mulder N."/>
            <person name="Nakano N."/>
            <person name="Nakauchi H."/>
            <person name="Ng P."/>
            <person name="Nilsson R."/>
            <person name="Nishiguchi S."/>
            <person name="Nishikawa S."/>
            <person name="Nori F."/>
            <person name="Ohara O."/>
            <person name="Okazaki Y."/>
            <person name="Orlando V."/>
            <person name="Pang K.C."/>
            <person name="Pavan W.J."/>
            <person name="Pavesi G."/>
            <person name="Pesole G."/>
            <person name="Petrovsky N."/>
            <person name="Piazza S."/>
            <person name="Reed J."/>
            <person name="Reid J.F."/>
            <person name="Ring B.Z."/>
            <person name="Ringwald M."/>
            <person name="Rost B."/>
            <person name="Ruan Y."/>
            <person name="Salzberg S.L."/>
            <person name="Sandelin A."/>
            <person name="Schneider C."/>
            <person name="Schoenbach C."/>
            <person name="Sekiguchi K."/>
            <person name="Semple C.A."/>
            <person name="Seno S."/>
            <person name="Sessa L."/>
            <person name="Sheng Y."/>
            <person name="Shibata Y."/>
            <person name="Shimada H."/>
            <person name="Shimada K."/>
            <person name="Silva D."/>
            <person name="Sinclair B."/>
            <person name="Sperling S."/>
            <person name="Stupka E."/>
            <person name="Sugiura K."/>
            <person name="Sultana R."/>
            <person name="Takenaka Y."/>
            <person name="Taki K."/>
            <person name="Tammoja K."/>
            <person name="Tan S.L."/>
            <person name="Tang S."/>
            <person name="Taylor M.S."/>
            <person name="Tegner J."/>
            <person name="Teichmann S.A."/>
            <person name="Ueda H.R."/>
            <person name="van Nimwegen E."/>
            <person name="Verardo R."/>
            <person name="Wei C.L."/>
            <person name="Yagi K."/>
            <person name="Yamanishi H."/>
            <person name="Zabarovsky E."/>
            <person name="Zhu S."/>
            <person name="Zimmer A."/>
            <person name="Hide W."/>
            <person name="Bult C."/>
            <person name="Grimmond S.M."/>
            <person name="Teasdale R.D."/>
            <person name="Liu E.T."/>
            <person name="Brusic V."/>
            <person name="Quackenbush J."/>
            <person name="Wahlestedt C."/>
            <person name="Mattick J.S."/>
            <person name="Hume D.A."/>
            <person name="Kai C."/>
            <person name="Sasaki D."/>
            <person name="Tomaru Y."/>
            <person name="Fukuda S."/>
            <person name="Kanamori-Katayama M."/>
            <person name="Suzuki M."/>
            <person name="Aoki J."/>
            <person name="Arakawa T."/>
            <person name="Iida J."/>
            <person name="Imamura K."/>
            <person name="Itoh M."/>
            <person name="Kato T."/>
            <person name="Kawaji H."/>
            <person name="Kawagashira N."/>
            <person name="Kawashima T."/>
            <person name="Kojima M."/>
            <person name="Kondo S."/>
            <person name="Konno H."/>
            <person name="Nakano K."/>
            <person name="Ninomiya N."/>
            <person name="Nishio T."/>
            <person name="Okada M."/>
            <person name="Plessy C."/>
            <person name="Shibata K."/>
            <person name="Shiraki T."/>
            <person name="Suzuki S."/>
            <person name="Tagami M."/>
            <person name="Waki K."/>
            <person name="Watahiki A."/>
            <person name="Okamura-Oho Y."/>
            <person name="Suzuki H."/>
            <person name="Kawai J."/>
            <person name="Hayashizaki Y."/>
        </authorList>
    </citation>
    <scope>NUCLEOTIDE SEQUENCE [LARGE SCALE MRNA] (ISOFORM 1)</scope>
    <source>
        <strain>C57BL/6J</strain>
        <tissue>Embryo</tissue>
        <tissue>Testis</tissue>
    </source>
</reference>
<reference key="3">
    <citation type="journal article" date="2004" name="Genome Res.">
        <title>The status, quality, and expansion of the NIH full-length cDNA project: the Mammalian Gene Collection (MGC).</title>
        <authorList>
            <consortium name="The MGC Project Team"/>
        </authorList>
    </citation>
    <scope>NUCLEOTIDE SEQUENCE [LARGE SCALE MRNA] (ISOFORM 1)</scope>
</reference>
<dbReference type="EMBL" id="AJ409150">
    <property type="protein sequence ID" value="CAC84079.1"/>
    <property type="molecule type" value="mRNA"/>
</dbReference>
<dbReference type="EMBL" id="AJ409151">
    <property type="protein sequence ID" value="CAC84080.1"/>
    <property type="molecule type" value="mRNA"/>
</dbReference>
<dbReference type="EMBL" id="AK005908">
    <property type="protein sequence ID" value="BAB24312.1"/>
    <property type="molecule type" value="mRNA"/>
</dbReference>
<dbReference type="EMBL" id="AK012484">
    <property type="protein sequence ID" value="BAB28271.1"/>
    <property type="molecule type" value="mRNA"/>
</dbReference>
<dbReference type="EMBL" id="BC027321">
    <property type="protein sequence ID" value="AAH27321.1"/>
    <property type="molecule type" value="mRNA"/>
</dbReference>
<dbReference type="CCDS" id="CCDS15742.1">
    <molecule id="Q9CQG3-1"/>
</dbReference>
<dbReference type="CCDS" id="CCDS79745.1">
    <molecule id="Q9CQG3-2"/>
</dbReference>
<dbReference type="RefSeq" id="NP_080297.1">
    <molecule id="Q9CQG3-1"/>
    <property type="nucleotide sequence ID" value="NM_026021.4"/>
</dbReference>
<dbReference type="RefSeq" id="NP_671708.1">
    <molecule id="Q9CQG3-2"/>
    <property type="nucleotide sequence ID" value="NM_147179.1"/>
</dbReference>
<dbReference type="SMR" id="Q9CQG3"/>
<dbReference type="BioGRID" id="212003">
    <property type="interactions" value="1"/>
</dbReference>
<dbReference type="FunCoup" id="Q9CQG3">
    <property type="interactions" value="600"/>
</dbReference>
<dbReference type="STRING" id="10090.ENSMUSP00000028350"/>
<dbReference type="iPTMnet" id="Q9CQG3"/>
<dbReference type="PhosphoSitePlus" id="Q9CQG3"/>
<dbReference type="PaxDb" id="10090-ENSMUSP00000028350"/>
<dbReference type="PeptideAtlas" id="Q9CQG3"/>
<dbReference type="ProteomicsDB" id="275374">
    <molecule id="Q9CQG3-1"/>
</dbReference>
<dbReference type="ProteomicsDB" id="275375">
    <molecule id="Q9CQG3-2"/>
</dbReference>
<dbReference type="Antibodypedia" id="19078">
    <property type="antibodies" value="67 antibodies from 19 providers"/>
</dbReference>
<dbReference type="DNASU" id="67187"/>
<dbReference type="Ensembl" id="ENSMUST00000028350.9">
    <molecule id="Q9CQG3-1"/>
    <property type="protein sequence ID" value="ENSMUSP00000028350.4"/>
    <property type="gene ID" value="ENSMUSG00000026974.12"/>
</dbReference>
<dbReference type="Ensembl" id="ENSMUST00000148042.3">
    <molecule id="Q9CQG3-2"/>
    <property type="protein sequence ID" value="ENSMUSP00000141788.2"/>
    <property type="gene ID" value="ENSMUSG00000026974.12"/>
</dbReference>
<dbReference type="GeneID" id="67187"/>
<dbReference type="KEGG" id="mmu:67187"/>
<dbReference type="UCSC" id="uc008ipo.1">
    <molecule id="Q9CQG3-1"/>
    <property type="organism name" value="mouse"/>
</dbReference>
<dbReference type="AGR" id="MGI:1914437"/>
<dbReference type="CTD" id="116225"/>
<dbReference type="MGI" id="MGI:1914437">
    <property type="gene designation" value="Zmynd19"/>
</dbReference>
<dbReference type="VEuPathDB" id="HostDB:ENSMUSG00000026974"/>
<dbReference type="eggNOG" id="ENOG502QUSS">
    <property type="taxonomic scope" value="Eukaryota"/>
</dbReference>
<dbReference type="GeneTree" id="ENSGT00940000153820"/>
<dbReference type="HOGENOM" id="CLU_084232_0_0_1"/>
<dbReference type="InParanoid" id="Q9CQG3"/>
<dbReference type="OMA" id="FYECHYP"/>
<dbReference type="OrthoDB" id="2951111at2759"/>
<dbReference type="PhylomeDB" id="Q9CQG3"/>
<dbReference type="TreeFam" id="TF329209"/>
<dbReference type="BioGRID-ORCS" id="67187">
    <property type="hits" value="1 hit in 78 CRISPR screens"/>
</dbReference>
<dbReference type="ChiTaRS" id="Zmynd19">
    <property type="organism name" value="mouse"/>
</dbReference>
<dbReference type="PRO" id="PR:Q9CQG3"/>
<dbReference type="Proteomes" id="UP000000589">
    <property type="component" value="Chromosome 2"/>
</dbReference>
<dbReference type="RNAct" id="Q9CQG3">
    <property type="molecule type" value="protein"/>
</dbReference>
<dbReference type="Bgee" id="ENSMUSG00000026974">
    <property type="expression patterns" value="Expressed in primary oocyte and 250 other cell types or tissues"/>
</dbReference>
<dbReference type="GO" id="GO:0005737">
    <property type="term" value="C:cytoplasm"/>
    <property type="evidence" value="ECO:0000314"/>
    <property type="project" value="MGI"/>
</dbReference>
<dbReference type="GO" id="GO:0016020">
    <property type="term" value="C:membrane"/>
    <property type="evidence" value="ECO:0000314"/>
    <property type="project" value="MGI"/>
</dbReference>
<dbReference type="GO" id="GO:0005886">
    <property type="term" value="C:plasma membrane"/>
    <property type="evidence" value="ECO:0007669"/>
    <property type="project" value="UniProtKB-SubCell"/>
</dbReference>
<dbReference type="GO" id="GO:0045202">
    <property type="term" value="C:synapse"/>
    <property type="evidence" value="ECO:0000314"/>
    <property type="project" value="MGI"/>
</dbReference>
<dbReference type="GO" id="GO:0008270">
    <property type="term" value="F:zinc ion binding"/>
    <property type="evidence" value="ECO:0007669"/>
    <property type="project" value="UniProtKB-KW"/>
</dbReference>
<dbReference type="FunFam" id="6.10.140.2220:FF:000007">
    <property type="entry name" value="Zinc finger MYND domain-containing protein 19"/>
    <property type="match status" value="1"/>
</dbReference>
<dbReference type="Gene3D" id="6.10.140.2220">
    <property type="match status" value="1"/>
</dbReference>
<dbReference type="InterPro" id="IPR044925">
    <property type="entry name" value="His-Me_finger_sf"/>
</dbReference>
<dbReference type="InterPro" id="IPR003615">
    <property type="entry name" value="HNH_nuc"/>
</dbReference>
<dbReference type="InterPro" id="IPR032978">
    <property type="entry name" value="ZMYND19"/>
</dbReference>
<dbReference type="InterPro" id="IPR002893">
    <property type="entry name" value="Znf_MYND"/>
</dbReference>
<dbReference type="PANTHER" id="PTHR46831">
    <property type="entry name" value="ZINC FINGER MYND DOMAIN-CONTAINING PROTEIN 19"/>
    <property type="match status" value="1"/>
</dbReference>
<dbReference type="PANTHER" id="PTHR46831:SF1">
    <property type="entry name" value="ZINC FINGER MYND DOMAIN-CONTAINING PROTEIN 19"/>
    <property type="match status" value="1"/>
</dbReference>
<dbReference type="Pfam" id="PF13392">
    <property type="entry name" value="HNH_3"/>
    <property type="match status" value="1"/>
</dbReference>
<dbReference type="Pfam" id="PF01753">
    <property type="entry name" value="zf-MYND"/>
    <property type="match status" value="1"/>
</dbReference>
<dbReference type="SUPFAM" id="SSF54060">
    <property type="entry name" value="His-Me finger endonucleases"/>
    <property type="match status" value="1"/>
</dbReference>
<dbReference type="SUPFAM" id="SSF144232">
    <property type="entry name" value="HIT/MYND zinc finger-like"/>
    <property type="match status" value="1"/>
</dbReference>
<dbReference type="PROSITE" id="PS01360">
    <property type="entry name" value="ZF_MYND_1"/>
    <property type="match status" value="1"/>
</dbReference>
<dbReference type="PROSITE" id="PS50865">
    <property type="entry name" value="ZF_MYND_2"/>
    <property type="match status" value="1"/>
</dbReference>
<gene>
    <name type="primary">Zmynd19</name>
    <name type="synonym">Mizip</name>
</gene>
<accession>Q9CQG3</accession>
<accession>Q8K1T3</accession>
<feature type="chain" id="PRO_0000218320" description="Zinc finger MYND domain-containing protein 19">
    <location>
        <begin position="1"/>
        <end position="227"/>
    </location>
</feature>
<feature type="zinc finger region" description="MYND-type; degenerate" evidence="2">
    <location>
        <begin position="174"/>
        <end position="212"/>
    </location>
</feature>
<feature type="binding site" evidence="2">
    <location>
        <position position="187"/>
    </location>
    <ligand>
        <name>Zn(2+)</name>
        <dbReference type="ChEBI" id="CHEBI:29105"/>
    </ligand>
</feature>
<feature type="binding site" evidence="2">
    <location>
        <position position="190"/>
    </location>
    <ligand>
        <name>Zn(2+)</name>
        <dbReference type="ChEBI" id="CHEBI:29105"/>
    </ligand>
</feature>
<feature type="binding site" evidence="2">
    <location>
        <position position="208"/>
    </location>
    <ligand>
        <name>Zn(2+)</name>
        <dbReference type="ChEBI" id="CHEBI:29105"/>
    </ligand>
</feature>
<feature type="binding site" evidence="2">
    <location>
        <position position="212"/>
    </location>
    <ligand>
        <name>Zn(2+)</name>
        <dbReference type="ChEBI" id="CHEBI:29105"/>
    </ligand>
</feature>
<feature type="splice variant" id="VSP_010075" description="In isoform 2." evidence="4">
    <location>
        <begin position="1"/>
        <end position="39"/>
    </location>
</feature>
<organism>
    <name type="scientific">Mus musculus</name>
    <name type="common">Mouse</name>
    <dbReference type="NCBI Taxonomy" id="10090"/>
    <lineage>
        <taxon>Eukaryota</taxon>
        <taxon>Metazoa</taxon>
        <taxon>Chordata</taxon>
        <taxon>Craniata</taxon>
        <taxon>Vertebrata</taxon>
        <taxon>Euteleostomi</taxon>
        <taxon>Mammalia</taxon>
        <taxon>Eutheria</taxon>
        <taxon>Euarchontoglires</taxon>
        <taxon>Glires</taxon>
        <taxon>Rodentia</taxon>
        <taxon>Myomorpha</taxon>
        <taxon>Muroidea</taxon>
        <taxon>Muridae</taxon>
        <taxon>Murinae</taxon>
        <taxon>Mus</taxon>
        <taxon>Mus</taxon>
    </lineage>
</organism>
<evidence type="ECO:0000250" key="1"/>
<evidence type="ECO:0000255" key="2">
    <source>
        <dbReference type="PROSITE-ProRule" id="PRU00134"/>
    </source>
</evidence>
<evidence type="ECO:0000269" key="3">
    <source>
    </source>
</evidence>
<evidence type="ECO:0000303" key="4">
    <source>
    </source>
</evidence>